<proteinExistence type="inferred from homology"/>
<sequence>MNPLISAASVIAAGLAVGLASIGPGIGQGTAAGQAVEGIARQPEAEGKIRGTLLLSLAFMEALTIYGLVVALALLFANPFV</sequence>
<organism>
    <name type="scientific">Pelargonium hortorum</name>
    <name type="common">Common geranium</name>
    <name type="synonym">Pelargonium inquinans x Pelargonium zonale</name>
    <dbReference type="NCBI Taxonomy" id="4031"/>
    <lineage>
        <taxon>Eukaryota</taxon>
        <taxon>Viridiplantae</taxon>
        <taxon>Streptophyta</taxon>
        <taxon>Embryophyta</taxon>
        <taxon>Tracheophyta</taxon>
        <taxon>Spermatophyta</taxon>
        <taxon>Magnoliopsida</taxon>
        <taxon>eudicotyledons</taxon>
        <taxon>Gunneridae</taxon>
        <taxon>Pentapetalae</taxon>
        <taxon>rosids</taxon>
        <taxon>malvids</taxon>
        <taxon>Geraniales</taxon>
        <taxon>Geraniaceae</taxon>
        <taxon>Pelargonium</taxon>
    </lineage>
</organism>
<reference key="1">
    <citation type="journal article" date="2006" name="Mol. Biol. Evol.">
        <title>The complete chloroplast genome sequence of Pelargonium x hortorum: organization and evolution of the largest and most highly rearranged chloroplast genome of land plants.</title>
        <authorList>
            <person name="Chumley T.W."/>
            <person name="Palmer J.D."/>
            <person name="Mower J.P."/>
            <person name="Fourcade H.M."/>
            <person name="Calie P.J."/>
            <person name="Boore J.L."/>
            <person name="Jansen R.K."/>
        </authorList>
    </citation>
    <scope>NUCLEOTIDE SEQUENCE [LARGE SCALE GENOMIC DNA]</scope>
    <source>
        <strain>cv. Ringo White</strain>
    </source>
</reference>
<geneLocation type="chloroplast"/>
<name>ATPH_PELHO</name>
<feature type="chain" id="PRO_0000362951" description="ATP synthase subunit c, chloroplastic">
    <location>
        <begin position="1"/>
        <end position="81"/>
    </location>
</feature>
<feature type="transmembrane region" description="Helical" evidence="1">
    <location>
        <begin position="7"/>
        <end position="27"/>
    </location>
</feature>
<feature type="transmembrane region" description="Helical" evidence="1">
    <location>
        <begin position="57"/>
        <end position="77"/>
    </location>
</feature>
<feature type="site" description="Reversibly protonated during proton transport" evidence="1">
    <location>
        <position position="61"/>
    </location>
</feature>
<accession>Q06FX4</accession>
<gene>
    <name evidence="1" type="primary">atpH</name>
</gene>
<protein>
    <recommendedName>
        <fullName evidence="1">ATP synthase subunit c, chloroplastic</fullName>
    </recommendedName>
    <alternativeName>
        <fullName evidence="1">ATP synthase F(0) sector subunit c</fullName>
    </alternativeName>
    <alternativeName>
        <fullName evidence="1">ATPase subunit III</fullName>
    </alternativeName>
    <alternativeName>
        <fullName evidence="1">F-type ATPase subunit c</fullName>
        <shortName evidence="1">F-ATPase subunit c</shortName>
    </alternativeName>
    <alternativeName>
        <fullName evidence="1">Lipid-binding protein</fullName>
    </alternativeName>
</protein>
<evidence type="ECO:0000255" key="1">
    <source>
        <dbReference type="HAMAP-Rule" id="MF_01396"/>
    </source>
</evidence>
<keyword id="KW-0066">ATP synthesis</keyword>
<keyword id="KW-0138">CF(0)</keyword>
<keyword id="KW-0150">Chloroplast</keyword>
<keyword id="KW-0375">Hydrogen ion transport</keyword>
<keyword id="KW-0406">Ion transport</keyword>
<keyword id="KW-0446">Lipid-binding</keyword>
<keyword id="KW-0472">Membrane</keyword>
<keyword id="KW-0934">Plastid</keyword>
<keyword id="KW-0793">Thylakoid</keyword>
<keyword id="KW-0812">Transmembrane</keyword>
<keyword id="KW-1133">Transmembrane helix</keyword>
<keyword id="KW-0813">Transport</keyword>
<comment type="function">
    <text evidence="1">F(1)F(0) ATP synthase produces ATP from ADP in the presence of a proton or sodium gradient. F-type ATPases consist of two structural domains, F(1) containing the extramembraneous catalytic core and F(0) containing the membrane proton channel, linked together by a central stalk and a peripheral stalk. During catalysis, ATP synthesis in the catalytic domain of F(1) is coupled via a rotary mechanism of the central stalk subunits to proton translocation.</text>
</comment>
<comment type="function">
    <text evidence="1">Key component of the F(0) channel; it plays a direct role in translocation across the membrane. A homomeric c-ring of between 10-14 subunits forms the central stalk rotor element with the F(1) delta and epsilon subunits.</text>
</comment>
<comment type="subunit">
    <text evidence="1">F-type ATPases have 2 components, F(1) - the catalytic core - and F(0) - the membrane proton channel. F(1) has five subunits: alpha(3), beta(3), gamma(1), delta(1), epsilon(1). F(0) has four main subunits: a(1), b(1), b'(1) and c(10-14). The alpha and beta chains form an alternating ring which encloses part of the gamma chain. F(1) is attached to F(0) by a central stalk formed by the gamma and epsilon chains, while a peripheral stalk is formed by the delta, b and b' chains.</text>
</comment>
<comment type="subcellular location">
    <subcellularLocation>
        <location evidence="1">Plastid</location>
        <location evidence="1">Chloroplast thylakoid membrane</location>
        <topology evidence="1">Multi-pass membrane protein</topology>
    </subcellularLocation>
</comment>
<comment type="miscellaneous">
    <text>In plastids the F-type ATPase is also known as CF(1)CF(0).</text>
</comment>
<comment type="similarity">
    <text evidence="1">Belongs to the ATPase C chain family.</text>
</comment>
<dbReference type="EMBL" id="DQ897681">
    <property type="protein sequence ID" value="ABI17248.1"/>
    <property type="molecule type" value="Genomic_DNA"/>
</dbReference>
<dbReference type="RefSeq" id="YP_784057.1">
    <property type="nucleotide sequence ID" value="NC_008454.1"/>
</dbReference>
<dbReference type="SMR" id="Q06FX4"/>
<dbReference type="GeneID" id="4362767"/>
<dbReference type="GO" id="GO:0009535">
    <property type="term" value="C:chloroplast thylakoid membrane"/>
    <property type="evidence" value="ECO:0007669"/>
    <property type="project" value="UniProtKB-SubCell"/>
</dbReference>
<dbReference type="GO" id="GO:0045259">
    <property type="term" value="C:proton-transporting ATP synthase complex"/>
    <property type="evidence" value="ECO:0007669"/>
    <property type="project" value="UniProtKB-KW"/>
</dbReference>
<dbReference type="GO" id="GO:0033177">
    <property type="term" value="C:proton-transporting two-sector ATPase complex, proton-transporting domain"/>
    <property type="evidence" value="ECO:0007669"/>
    <property type="project" value="InterPro"/>
</dbReference>
<dbReference type="GO" id="GO:0008289">
    <property type="term" value="F:lipid binding"/>
    <property type="evidence" value="ECO:0007669"/>
    <property type="project" value="UniProtKB-KW"/>
</dbReference>
<dbReference type="GO" id="GO:0046933">
    <property type="term" value="F:proton-transporting ATP synthase activity, rotational mechanism"/>
    <property type="evidence" value="ECO:0007669"/>
    <property type="project" value="UniProtKB-UniRule"/>
</dbReference>
<dbReference type="CDD" id="cd18183">
    <property type="entry name" value="ATP-synt_Fo_c_ATPH"/>
    <property type="match status" value="1"/>
</dbReference>
<dbReference type="FunFam" id="1.20.20.10:FF:000001">
    <property type="entry name" value="ATP synthase subunit c, chloroplastic"/>
    <property type="match status" value="1"/>
</dbReference>
<dbReference type="Gene3D" id="1.20.20.10">
    <property type="entry name" value="F1F0 ATP synthase subunit C"/>
    <property type="match status" value="1"/>
</dbReference>
<dbReference type="HAMAP" id="MF_01396">
    <property type="entry name" value="ATP_synth_c_bact"/>
    <property type="match status" value="1"/>
</dbReference>
<dbReference type="InterPro" id="IPR005953">
    <property type="entry name" value="ATP_synth_csu_bac/chlpt"/>
</dbReference>
<dbReference type="InterPro" id="IPR000454">
    <property type="entry name" value="ATP_synth_F0_csu"/>
</dbReference>
<dbReference type="InterPro" id="IPR020537">
    <property type="entry name" value="ATP_synth_F0_csu_DDCD_BS"/>
</dbReference>
<dbReference type="InterPro" id="IPR038662">
    <property type="entry name" value="ATP_synth_F0_csu_sf"/>
</dbReference>
<dbReference type="InterPro" id="IPR002379">
    <property type="entry name" value="ATPase_proteolipid_c-like_dom"/>
</dbReference>
<dbReference type="InterPro" id="IPR035921">
    <property type="entry name" value="F/V-ATP_Csub_sf"/>
</dbReference>
<dbReference type="NCBIfam" id="TIGR01260">
    <property type="entry name" value="ATP_synt_c"/>
    <property type="match status" value="1"/>
</dbReference>
<dbReference type="NCBIfam" id="NF005608">
    <property type="entry name" value="PRK07354.1"/>
    <property type="match status" value="1"/>
</dbReference>
<dbReference type="PANTHER" id="PTHR10031">
    <property type="entry name" value="ATP SYNTHASE LIPID-BINDING PROTEIN, MITOCHONDRIAL"/>
    <property type="match status" value="1"/>
</dbReference>
<dbReference type="PANTHER" id="PTHR10031:SF0">
    <property type="entry name" value="ATPASE PROTEIN 9"/>
    <property type="match status" value="1"/>
</dbReference>
<dbReference type="Pfam" id="PF00137">
    <property type="entry name" value="ATP-synt_C"/>
    <property type="match status" value="1"/>
</dbReference>
<dbReference type="PRINTS" id="PR00124">
    <property type="entry name" value="ATPASEC"/>
</dbReference>
<dbReference type="SUPFAM" id="SSF81333">
    <property type="entry name" value="F1F0 ATP synthase subunit C"/>
    <property type="match status" value="1"/>
</dbReference>
<dbReference type="PROSITE" id="PS00605">
    <property type="entry name" value="ATPASE_C"/>
    <property type="match status" value="1"/>
</dbReference>